<sequence>MDPKKIARINELAKKKKTEGLTPEEKVEQAKLREEYIEGYRRAVRHHIEGIKIVDEEGNDVTPEKLRQVQREKGLHGRSLDDPNS</sequence>
<gene>
    <name type="ordered locus">SP_1473</name>
</gene>
<organism>
    <name type="scientific">Streptococcus pneumoniae serotype 4 (strain ATCC BAA-334 / TIGR4)</name>
    <dbReference type="NCBI Taxonomy" id="170187"/>
    <lineage>
        <taxon>Bacteria</taxon>
        <taxon>Bacillati</taxon>
        <taxon>Bacillota</taxon>
        <taxon>Bacilli</taxon>
        <taxon>Lactobacillales</taxon>
        <taxon>Streptococcaceae</taxon>
        <taxon>Streptococcus</taxon>
    </lineage>
</organism>
<name>Y1473_STRPN</name>
<proteinExistence type="evidence at protein level"/>
<accession>Q97PW7</accession>
<feature type="chain" id="PRO_0000095000" description="UPF0291 protein SP_1473">
    <location>
        <begin position="1"/>
        <end position="85"/>
    </location>
</feature>
<feature type="region of interest" description="Disordered" evidence="2">
    <location>
        <begin position="62"/>
        <end position="85"/>
    </location>
</feature>
<protein>
    <recommendedName>
        <fullName evidence="1">UPF0291 protein SP_1473</fullName>
    </recommendedName>
</protein>
<evidence type="ECO:0000255" key="1">
    <source>
        <dbReference type="HAMAP-Rule" id="MF_01103"/>
    </source>
</evidence>
<evidence type="ECO:0000256" key="2">
    <source>
        <dbReference type="SAM" id="MobiDB-lite"/>
    </source>
</evidence>
<comment type="interaction">
    <interactant intactId="EBI-6472858">
        <id>Q97PW7</id>
    </interactant>
    <interactant intactId="EBI-6472853">
        <id>P65779</id>
        <label>nadK</label>
    </interactant>
    <organismsDiffer>false</organismsDiffer>
    <experiments>3</experiments>
</comment>
<comment type="interaction">
    <interactant intactId="EBI-6472858">
        <id>Q97PW7</id>
    </interactant>
    <interactant intactId="EBI-6474132">
        <id>Q97PR7</id>
        <label>SP_1535</label>
    </interactant>
    <organismsDiffer>false</organismsDiffer>
    <experiments>2</experiments>
</comment>
<comment type="subcellular location">
    <subcellularLocation>
        <location evidence="1">Cytoplasm</location>
    </subcellularLocation>
</comment>
<comment type="similarity">
    <text evidence="1">Belongs to the UPF0291 family.</text>
</comment>
<reference key="1">
    <citation type="journal article" date="2001" name="Science">
        <title>Complete genome sequence of a virulent isolate of Streptococcus pneumoniae.</title>
        <authorList>
            <person name="Tettelin H."/>
            <person name="Nelson K.E."/>
            <person name="Paulsen I.T."/>
            <person name="Eisen J.A."/>
            <person name="Read T.D."/>
            <person name="Peterson S.N."/>
            <person name="Heidelberg J.F."/>
            <person name="DeBoy R.T."/>
            <person name="Haft D.H."/>
            <person name="Dodson R.J."/>
            <person name="Durkin A.S."/>
            <person name="Gwinn M.L."/>
            <person name="Kolonay J.F."/>
            <person name="Nelson W.C."/>
            <person name="Peterson J.D."/>
            <person name="Umayam L.A."/>
            <person name="White O."/>
            <person name="Salzberg S.L."/>
            <person name="Lewis M.R."/>
            <person name="Radune D."/>
            <person name="Holtzapple E.K."/>
            <person name="Khouri H.M."/>
            <person name="Wolf A.M."/>
            <person name="Utterback T.R."/>
            <person name="Hansen C.L."/>
            <person name="McDonald L.A."/>
            <person name="Feldblyum T.V."/>
            <person name="Angiuoli S.V."/>
            <person name="Dickinson T."/>
            <person name="Hickey E.K."/>
            <person name="Holt I.E."/>
            <person name="Loftus B.J."/>
            <person name="Yang F."/>
            <person name="Smith H.O."/>
            <person name="Venter J.C."/>
            <person name="Dougherty B.A."/>
            <person name="Morrison D.A."/>
            <person name="Hollingshead S.K."/>
            <person name="Fraser C.M."/>
        </authorList>
    </citation>
    <scope>NUCLEOTIDE SEQUENCE [LARGE SCALE GENOMIC DNA]</scope>
    <source>
        <strain>ATCC BAA-334 / TIGR4</strain>
    </source>
</reference>
<keyword id="KW-0963">Cytoplasm</keyword>
<keyword id="KW-1185">Reference proteome</keyword>
<dbReference type="EMBL" id="AE005672">
    <property type="protein sequence ID" value="AAK75567.1"/>
    <property type="molecule type" value="Genomic_DNA"/>
</dbReference>
<dbReference type="PIR" id="F95171">
    <property type="entry name" value="F95171"/>
</dbReference>
<dbReference type="RefSeq" id="WP_000371287.1">
    <property type="nucleotide sequence ID" value="NZ_CP155539.1"/>
</dbReference>
<dbReference type="SMR" id="Q97PW7"/>
<dbReference type="IntAct" id="Q97PW7">
    <property type="interactions" value="2"/>
</dbReference>
<dbReference type="PaxDb" id="170187-SP_1473"/>
<dbReference type="EnsemblBacteria" id="AAK75567">
    <property type="protein sequence ID" value="AAK75567"/>
    <property type="gene ID" value="SP_1473"/>
</dbReference>
<dbReference type="KEGG" id="spn:SP_1473"/>
<dbReference type="eggNOG" id="COG4224">
    <property type="taxonomic scope" value="Bacteria"/>
</dbReference>
<dbReference type="PhylomeDB" id="Q97PW7"/>
<dbReference type="BioCyc" id="SPNE170187:G1FZB-1489-MONOMER"/>
<dbReference type="Proteomes" id="UP000000585">
    <property type="component" value="Chromosome"/>
</dbReference>
<dbReference type="GO" id="GO:0005737">
    <property type="term" value="C:cytoplasm"/>
    <property type="evidence" value="ECO:0007669"/>
    <property type="project" value="UniProtKB-SubCell"/>
</dbReference>
<dbReference type="Gene3D" id="1.10.287.540">
    <property type="entry name" value="Helix hairpin bin"/>
    <property type="match status" value="1"/>
</dbReference>
<dbReference type="HAMAP" id="MF_01103">
    <property type="entry name" value="UPF0291"/>
    <property type="match status" value="1"/>
</dbReference>
<dbReference type="InterPro" id="IPR009242">
    <property type="entry name" value="DUF896"/>
</dbReference>
<dbReference type="NCBIfam" id="NF002711">
    <property type="entry name" value="PRK02539.1"/>
    <property type="match status" value="1"/>
</dbReference>
<dbReference type="PANTHER" id="PTHR37300">
    <property type="entry name" value="UPF0291 PROTEIN CBO2609/CLC_2481"/>
    <property type="match status" value="1"/>
</dbReference>
<dbReference type="PANTHER" id="PTHR37300:SF1">
    <property type="entry name" value="UPF0291 PROTEIN YNZC"/>
    <property type="match status" value="1"/>
</dbReference>
<dbReference type="Pfam" id="PF05979">
    <property type="entry name" value="DUF896"/>
    <property type="match status" value="1"/>
</dbReference>
<dbReference type="SUPFAM" id="SSF158221">
    <property type="entry name" value="YnzC-like"/>
    <property type="match status" value="1"/>
</dbReference>